<reference key="1">
    <citation type="journal article" date="1996" name="J. Virol.">
        <title>Determination and analysis of the complete nucleotide sequence of human herpesvirus.</title>
        <authorList>
            <person name="Nicholas J."/>
        </authorList>
    </citation>
    <scope>NUCLEOTIDE SEQUENCE [LARGE SCALE GENOMIC DNA]</scope>
</reference>
<protein>
    <recommendedName>
        <fullName evidence="1">Envelope glycoprotein M</fullName>
        <shortName evidence="1">gM</shortName>
    </recommendedName>
</protein>
<gene>
    <name evidence="1" type="primary">gM</name>
    <name type="ORF">U72</name>
</gene>
<sequence length="346" mass="40125">MALSRVDVINMRIWVLSIICACLTYVNVTVHLVAVHFPNLGFPCAYYEINDMKAINLSIRNDIRSLTPQLYLNPIQLICYVVFMDICFFFILVYYIVCCVKVFSSEKTPNINQSTRDITWMGDSLSCFQFVLTMDTYQFFVTCLSFRLVTLAAFTYCLFFICFTAFTLTMITQYQSSERSFFVLKRIHPKLKGTIKYKTIIINMIELMLGFSSMVFAITICLGLGNNFYIKSSTVAFASINTFFVMSFVYSLVIELILHQYVKVQFGLHFGILFGILGLTYPILKYDSLFKTEWTVKFIVNLAVITIVCLSFIICRLIRFFMRKHHNYKKLPTTVEDLDVLEEANE</sequence>
<organismHost>
    <name type="scientific">Homo sapiens</name>
    <name type="common">Human</name>
    <dbReference type="NCBI Taxonomy" id="9606"/>
</organismHost>
<name>GM_HHV7J</name>
<keyword id="KW-1015">Disulfide bond</keyword>
<keyword id="KW-0325">Glycoprotein</keyword>
<keyword id="KW-1039">Host endosome</keyword>
<keyword id="KW-1040">Host Golgi apparatus</keyword>
<keyword id="KW-1043">Host membrane</keyword>
<keyword id="KW-1048">Host nucleus</keyword>
<keyword id="KW-0472">Membrane</keyword>
<keyword id="KW-1185">Reference proteome</keyword>
<keyword id="KW-0812">Transmembrane</keyword>
<keyword id="KW-1133">Transmembrane helix</keyword>
<keyword id="KW-0261">Viral envelope protein</keyword>
<keyword id="KW-0946">Virion</keyword>
<evidence type="ECO:0000255" key="1">
    <source>
        <dbReference type="HAMAP-Rule" id="MF_04035"/>
    </source>
</evidence>
<feature type="chain" id="PRO_0000115781" description="Envelope glycoprotein M">
    <location>
        <begin position="1"/>
        <end position="346"/>
    </location>
</feature>
<feature type="topological domain" description="Intravirion" evidence="1">
    <location>
        <begin position="1"/>
        <end position="12"/>
    </location>
</feature>
<feature type="transmembrane region" description="Helical" evidence="1">
    <location>
        <begin position="13"/>
        <end position="33"/>
    </location>
</feature>
<feature type="topological domain" description="Virion surface" evidence="1">
    <location>
        <begin position="34"/>
        <end position="76"/>
    </location>
</feature>
<feature type="transmembrane region" description="Helical" evidence="1">
    <location>
        <begin position="77"/>
        <end position="97"/>
    </location>
</feature>
<feature type="topological domain" description="Intravirion" evidence="1">
    <location>
        <begin position="98"/>
        <end position="117"/>
    </location>
</feature>
<feature type="transmembrane region" description="Helical" evidence="1">
    <location>
        <begin position="118"/>
        <end position="140"/>
    </location>
</feature>
<feature type="topological domain" description="Virion surface" evidence="1">
    <location>
        <begin position="141"/>
        <end position="147"/>
    </location>
</feature>
<feature type="transmembrane region" description="Helical" evidence="1">
    <location>
        <begin position="148"/>
        <end position="168"/>
    </location>
</feature>
<feature type="topological domain" description="Intravirion" evidence="1">
    <location>
        <begin position="169"/>
        <end position="199"/>
    </location>
</feature>
<feature type="transmembrane region" description="Helical" evidence="1">
    <location>
        <begin position="200"/>
        <end position="220"/>
    </location>
</feature>
<feature type="topological domain" description="Virion surface" evidence="1">
    <location>
        <begin position="221"/>
        <end position="236"/>
    </location>
</feature>
<feature type="transmembrane region" description="Helical" evidence="1">
    <location>
        <begin position="237"/>
        <end position="257"/>
    </location>
</feature>
<feature type="topological domain" description="Intravirion" evidence="1">
    <location>
        <begin position="258"/>
        <end position="263"/>
    </location>
</feature>
<feature type="transmembrane region" description="Helical" evidence="1">
    <location>
        <begin position="264"/>
        <end position="284"/>
    </location>
</feature>
<feature type="topological domain" description="Virion surface" evidence="1">
    <location>
        <begin position="285"/>
        <end position="293"/>
    </location>
</feature>
<feature type="transmembrane region" description="Helical" evidence="1">
    <location>
        <begin position="294"/>
        <end position="314"/>
    </location>
</feature>
<feature type="topological domain" description="Intravirion" evidence="1">
    <location>
        <begin position="315"/>
        <end position="346"/>
    </location>
</feature>
<feature type="disulfide bond" description="Interchain (with gN)" evidence="1">
    <location>
        <position position="44"/>
    </location>
</feature>
<dbReference type="EMBL" id="U43400">
    <property type="protein sequence ID" value="AAC54733.1"/>
    <property type="molecule type" value="Genomic_DNA"/>
</dbReference>
<dbReference type="PIR" id="T41973">
    <property type="entry name" value="T41973"/>
</dbReference>
<dbReference type="RefSeq" id="YP_073812.1">
    <property type="nucleotide sequence ID" value="NC_001716.2"/>
</dbReference>
<dbReference type="GeneID" id="3289530"/>
<dbReference type="KEGG" id="vg:3289530"/>
<dbReference type="Proteomes" id="UP000009246">
    <property type="component" value="Segment"/>
</dbReference>
<dbReference type="GO" id="GO:0044175">
    <property type="term" value="C:host cell endosome membrane"/>
    <property type="evidence" value="ECO:0007669"/>
    <property type="project" value="UniProtKB-SubCell"/>
</dbReference>
<dbReference type="GO" id="GO:0044177">
    <property type="term" value="C:host cell Golgi apparatus"/>
    <property type="evidence" value="ECO:0007669"/>
    <property type="project" value="UniProtKB-SubCell"/>
</dbReference>
<dbReference type="GO" id="GO:0044201">
    <property type="term" value="C:host cell nuclear inner membrane"/>
    <property type="evidence" value="ECO:0007669"/>
    <property type="project" value="UniProtKB-SubCell"/>
</dbReference>
<dbReference type="GO" id="GO:0016020">
    <property type="term" value="C:membrane"/>
    <property type="evidence" value="ECO:0007669"/>
    <property type="project" value="UniProtKB-KW"/>
</dbReference>
<dbReference type="GO" id="GO:0019031">
    <property type="term" value="C:viral envelope"/>
    <property type="evidence" value="ECO:0007669"/>
    <property type="project" value="UniProtKB-KW"/>
</dbReference>
<dbReference type="GO" id="GO:0055036">
    <property type="term" value="C:virion membrane"/>
    <property type="evidence" value="ECO:0007669"/>
    <property type="project" value="UniProtKB-SubCell"/>
</dbReference>
<dbReference type="HAMAP" id="MF_04035">
    <property type="entry name" value="HSV_GM"/>
    <property type="match status" value="1"/>
</dbReference>
<dbReference type="InterPro" id="IPR000785">
    <property type="entry name" value="Herpes_glycop_M"/>
</dbReference>
<dbReference type="Pfam" id="PF01528">
    <property type="entry name" value="Herpes_glycop"/>
    <property type="match status" value="1"/>
</dbReference>
<dbReference type="PRINTS" id="PR00333">
    <property type="entry name" value="HSVINTEGRLMP"/>
</dbReference>
<comment type="function">
    <text evidence="1">Envelope glycoprotein important for virion assembly and egress. Plays a role in the correct incorporation of gH-gL into virion membrane. Directs the glycoprotein N (gN) to the host trans-Golgi network.</text>
</comment>
<comment type="subunit">
    <text evidence="1">Interacts (via N-terminus) with gN (via N-terminus). The gM-gN heterodimer forms the gCII complex.</text>
</comment>
<comment type="subcellular location">
    <subcellularLocation>
        <location evidence="1">Virion membrane</location>
        <topology evidence="1">Multi-pass membrane protein</topology>
    </subcellularLocation>
    <subcellularLocation>
        <location evidence="1">Host Golgi apparatus</location>
        <location evidence="1">Host trans-Golgi network</location>
    </subcellularLocation>
    <subcellularLocation>
        <location evidence="1">Host endosome membrane</location>
        <topology evidence="1">Multi-pass membrane protein</topology>
    </subcellularLocation>
    <subcellularLocation>
        <location evidence="1">Host nucleus inner membrane</location>
        <topology evidence="1">Multi-pass membrane protein</topology>
    </subcellularLocation>
    <text evidence="1">During virion morphogenesis, this protein accumulates in the trans-Golgi network where secondary envelopment occurs.</text>
</comment>
<comment type="similarity">
    <text evidence="1">Belongs to the herpesviridae glycoprotein M family.</text>
</comment>
<proteinExistence type="inferred from homology"/>
<accession>P52372</accession>
<organism>
    <name type="scientific">Human herpesvirus 7 (strain JI)</name>
    <name type="common">HHV-7</name>
    <name type="synonym">Human T lymphotropic virus</name>
    <dbReference type="NCBI Taxonomy" id="57278"/>
    <lineage>
        <taxon>Viruses</taxon>
        <taxon>Duplodnaviria</taxon>
        <taxon>Heunggongvirae</taxon>
        <taxon>Peploviricota</taxon>
        <taxon>Herviviricetes</taxon>
        <taxon>Herpesvirales</taxon>
        <taxon>Orthoherpesviridae</taxon>
        <taxon>Betaherpesvirinae</taxon>
        <taxon>Roseolovirus</taxon>
        <taxon>Roseolovirus humanbeta7</taxon>
        <taxon>Human betaherpesvirus 7</taxon>
    </lineage>
</organism>